<keyword id="KW-0002">3D-structure</keyword>
<keyword id="KW-0106">Calcium</keyword>
<keyword id="KW-0903">Direct protein sequencing</keyword>
<keyword id="KW-0378">Hydrolase</keyword>
<keyword id="KW-0479">Metal-binding</keyword>
<keyword id="KW-0482">Metalloprotease</keyword>
<keyword id="KW-0645">Protease</keyword>
<keyword id="KW-0964">Secreted</keyword>
<keyword id="KW-0732">Signal</keyword>
<keyword id="KW-0862">Zinc</keyword>
<keyword id="KW-0865">Zymogen</keyword>
<accession>P29148</accession>
<name>NPRE_PAEPO</name>
<reference key="1">
    <citation type="journal article" date="1991" name="J. Bacteriol.">
        <title>Proteases involved in generation of beta- and alpha-amylases from a large amylase precursor in Bacillus polymyxa.</title>
        <authorList>
            <person name="Takekawa S."/>
            <person name="Uozumi N."/>
            <person name="Tsukagoshi N."/>
            <person name="Udaka S."/>
        </authorList>
    </citation>
    <scope>NUCLEOTIDE SEQUENCE [GENOMIC DNA]</scope>
    <scope>PROTEIN SEQUENCE OF 287-301</scope>
    <source>
        <strain>72</strain>
    </source>
</reference>
<protein>
    <recommendedName>
        <fullName>Bacillolysin</fullName>
        <ecNumber>3.4.24.28</ecNumber>
    </recommendedName>
    <alternativeName>
        <fullName>Neutral protease</fullName>
    </alternativeName>
</protein>
<organism>
    <name type="scientific">Paenibacillus polymyxa</name>
    <name type="common">Bacillus polymyxa</name>
    <dbReference type="NCBI Taxonomy" id="1406"/>
    <lineage>
        <taxon>Bacteria</taxon>
        <taxon>Bacillati</taxon>
        <taxon>Bacillota</taxon>
        <taxon>Bacilli</taxon>
        <taxon>Bacillales</taxon>
        <taxon>Paenibacillaceae</taxon>
        <taxon>Paenibacillus</taxon>
    </lineage>
</organism>
<proteinExistence type="evidence at protein level"/>
<gene>
    <name type="primary">npr</name>
</gene>
<evidence type="ECO:0000255" key="1"/>
<evidence type="ECO:0000255" key="2">
    <source>
        <dbReference type="PROSITE-ProRule" id="PRU10095"/>
    </source>
</evidence>
<evidence type="ECO:0000269" key="3">
    <source>
    </source>
</evidence>
<evidence type="ECO:0000305" key="4"/>
<evidence type="ECO:0007829" key="5">
    <source>
        <dbReference type="PDB" id="4GER"/>
    </source>
</evidence>
<dbReference type="EC" id="3.4.24.28"/>
<dbReference type="EMBL" id="D00861">
    <property type="protein sequence ID" value="BAA00734.1"/>
    <property type="molecule type" value="Genomic_DNA"/>
</dbReference>
<dbReference type="PIR" id="A41335">
    <property type="entry name" value="A41335"/>
</dbReference>
<dbReference type="PDB" id="4GER">
    <property type="method" value="X-ray"/>
    <property type="resolution" value="1.59 A"/>
    <property type="chains" value="A/B=290-590"/>
</dbReference>
<dbReference type="PDBsum" id="4GER"/>
<dbReference type="SMR" id="P29148"/>
<dbReference type="MEROPS" id="M04.018"/>
<dbReference type="eggNOG" id="COG3227">
    <property type="taxonomic scope" value="Bacteria"/>
</dbReference>
<dbReference type="EvolutionaryTrace" id="P29148"/>
<dbReference type="GO" id="GO:0005576">
    <property type="term" value="C:extracellular region"/>
    <property type="evidence" value="ECO:0007669"/>
    <property type="project" value="UniProtKB-SubCell"/>
</dbReference>
<dbReference type="GO" id="GO:0046872">
    <property type="term" value="F:metal ion binding"/>
    <property type="evidence" value="ECO:0007669"/>
    <property type="project" value="UniProtKB-KW"/>
</dbReference>
<dbReference type="GO" id="GO:0004222">
    <property type="term" value="F:metalloendopeptidase activity"/>
    <property type="evidence" value="ECO:0007669"/>
    <property type="project" value="InterPro"/>
</dbReference>
<dbReference type="GO" id="GO:0006508">
    <property type="term" value="P:proteolysis"/>
    <property type="evidence" value="ECO:0007669"/>
    <property type="project" value="UniProtKB-KW"/>
</dbReference>
<dbReference type="CDD" id="cd09597">
    <property type="entry name" value="M4_TLP"/>
    <property type="match status" value="1"/>
</dbReference>
<dbReference type="FunFam" id="1.10.390.10:FF:000012">
    <property type="entry name" value="Thermolysin"/>
    <property type="match status" value="1"/>
</dbReference>
<dbReference type="Gene3D" id="3.10.170.10">
    <property type="match status" value="1"/>
</dbReference>
<dbReference type="Gene3D" id="3.10.450.40">
    <property type="match status" value="1"/>
</dbReference>
<dbReference type="Gene3D" id="3.10.450.490">
    <property type="match status" value="1"/>
</dbReference>
<dbReference type="Gene3D" id="1.10.390.10">
    <property type="entry name" value="Neutral Protease Domain 2"/>
    <property type="match status" value="1"/>
</dbReference>
<dbReference type="InterPro" id="IPR011096">
    <property type="entry name" value="FTP_domain"/>
</dbReference>
<dbReference type="InterPro" id="IPR023612">
    <property type="entry name" value="Peptidase_M4"/>
</dbReference>
<dbReference type="InterPro" id="IPR027268">
    <property type="entry name" value="Peptidase_M4/M1_CTD_sf"/>
</dbReference>
<dbReference type="InterPro" id="IPR001570">
    <property type="entry name" value="Peptidase_M4_C_domain"/>
</dbReference>
<dbReference type="InterPro" id="IPR013856">
    <property type="entry name" value="Peptidase_M4_domain"/>
</dbReference>
<dbReference type="InterPro" id="IPR050728">
    <property type="entry name" value="Zinc_Metalloprotease_M4"/>
</dbReference>
<dbReference type="PANTHER" id="PTHR33794">
    <property type="entry name" value="BACILLOLYSIN"/>
    <property type="match status" value="1"/>
</dbReference>
<dbReference type="PANTHER" id="PTHR33794:SF3">
    <property type="entry name" value="NEUTRAL PROTEASE B"/>
    <property type="match status" value="1"/>
</dbReference>
<dbReference type="Pfam" id="PF07504">
    <property type="entry name" value="FTP"/>
    <property type="match status" value="1"/>
</dbReference>
<dbReference type="Pfam" id="PF01447">
    <property type="entry name" value="Peptidase_M4"/>
    <property type="match status" value="1"/>
</dbReference>
<dbReference type="Pfam" id="PF02868">
    <property type="entry name" value="Peptidase_M4_C"/>
    <property type="match status" value="1"/>
</dbReference>
<dbReference type="PRINTS" id="PR00730">
    <property type="entry name" value="THERMOLYSIN"/>
</dbReference>
<dbReference type="SUPFAM" id="SSF55486">
    <property type="entry name" value="Metalloproteases ('zincins'), catalytic domain"/>
    <property type="match status" value="1"/>
</dbReference>
<dbReference type="PROSITE" id="PS00142">
    <property type="entry name" value="ZINC_PROTEASE"/>
    <property type="match status" value="1"/>
</dbReference>
<comment type="function">
    <text>Involved in the generation of beta- and alpha-amylases from the large amylase precursor.</text>
</comment>
<comment type="catalytic activity">
    <reaction>
        <text>Similar, but not identical, to that of thermolysin.</text>
        <dbReference type="EC" id="3.4.24.28"/>
    </reaction>
</comment>
<comment type="cofactor">
    <cofactor evidence="4">
        <name>Ca(2+)</name>
        <dbReference type="ChEBI" id="CHEBI:29108"/>
    </cofactor>
    <text evidence="4">Binds 4 Ca(2+) ions per subunit.</text>
</comment>
<comment type="cofactor">
    <cofactor evidence="4">
        <name>Zn(2+)</name>
        <dbReference type="ChEBI" id="CHEBI:29105"/>
    </cofactor>
    <text evidence="4">Binds 1 zinc ion per subunit.</text>
</comment>
<comment type="subcellular location">
    <subcellularLocation>
        <location>Secreted</location>
    </subcellularLocation>
</comment>
<comment type="similarity">
    <text evidence="4">Belongs to the peptidase M4 family.</text>
</comment>
<sequence>MKKVWFSLLGGAMLLGSVASGASAESSVSGPAQLTPTFHTEQWKAPSSVSGDDIVWSYLNRQKKSLLGVDSSSVREQFRIVDRTSDKSGVSHYRLKQYVNGIPVYGAEQTIHVGKSGEVTSYLGAVINEDQQEEATQGTTPKISASEAVYTAYKEAAARIEALPTSDDTISKDAEEPSSVSKDTYAEAANNDKTLSVDKDELSLDKASVLKDSKIEAVEAEKSSIAKIANLQPEVDPKAELYYYPKGDDLLLVYVTEVNVLEPAPLRTRYIIDANDGSIVFQYDIINEATGKGVLGDSKSFTTTASGSSYQLKDTTRGNGIVTYTASNRQSIPGTLLTDADNVWNDPAGVDAHAYAAKTYDYYKSKFGRNSIDGRGLQLRSTVHYGSRYNNAFWNGSQMTYGDGDGDGSTFIAFSGDPDVVGHELTHGVTEYTSNLEYYGESGALNEAFSDVIGNDIQRKNWLVGDDIYTPNICGDALRSMSNPTLYDQPHHYSNLYKGSSDNGGVHTNSGIINKAYYLLAQGGTFHGVTVNGIGRDAAVQIYYSAFTNYLTSSSDFSNARAAVIQAAKDLYGANSAEATAAAKSFDAVG</sequence>
<feature type="signal peptide" evidence="1">
    <location>
        <begin position="1"/>
        <end position="24"/>
    </location>
</feature>
<feature type="propeptide" id="PRO_0000028602" description="Activation peptide" evidence="3">
    <location>
        <begin position="25"/>
        <end position="286"/>
    </location>
</feature>
<feature type="chain" id="PRO_0000028603" description="Bacillolysin">
    <location>
        <begin position="287"/>
        <end position="590"/>
    </location>
</feature>
<feature type="active site" evidence="2">
    <location>
        <position position="424"/>
    </location>
</feature>
<feature type="active site" description="Proton donor" evidence="2">
    <location>
        <position position="507"/>
    </location>
</feature>
<feature type="binding site" evidence="1">
    <location>
        <position position="339"/>
    </location>
    <ligand>
        <name>Ca(2+)</name>
        <dbReference type="ChEBI" id="CHEBI:29108"/>
        <label>1</label>
    </ligand>
</feature>
<feature type="binding site" evidence="1">
    <location>
        <position position="341"/>
    </location>
    <ligand>
        <name>Ca(2+)</name>
        <dbReference type="ChEBI" id="CHEBI:29108"/>
        <label>1</label>
    </ligand>
</feature>
<feature type="binding site" evidence="1">
    <location>
        <position position="419"/>
    </location>
    <ligand>
        <name>Ca(2+)</name>
        <dbReference type="ChEBI" id="CHEBI:29108"/>
        <label>2</label>
    </ligand>
</feature>
<feature type="binding site" evidence="2">
    <location>
        <position position="423"/>
    </location>
    <ligand>
        <name>Zn(2+)</name>
        <dbReference type="ChEBI" id="CHEBI:29105"/>
        <note>catalytic</note>
    </ligand>
</feature>
<feature type="binding site" evidence="2">
    <location>
        <position position="427"/>
    </location>
    <ligand>
        <name>Zn(2+)</name>
        <dbReference type="ChEBI" id="CHEBI:29105"/>
        <note>catalytic</note>
    </ligand>
</feature>
<feature type="binding site" evidence="2">
    <location>
        <position position="447"/>
    </location>
    <ligand>
        <name>Zn(2+)</name>
        <dbReference type="ChEBI" id="CHEBI:29105"/>
        <note>catalytic</note>
    </ligand>
</feature>
<feature type="binding site" evidence="1">
    <location>
        <position position="466"/>
    </location>
    <ligand>
        <name>Ca(2+)</name>
        <dbReference type="ChEBI" id="CHEBI:29108"/>
        <label>2</label>
    </ligand>
</feature>
<feature type="binding site" evidence="1">
    <location>
        <position position="466"/>
    </location>
    <ligand>
        <name>Ca(2+)</name>
        <dbReference type="ChEBI" id="CHEBI:29108"/>
        <label>3</label>
    </ligand>
</feature>
<feature type="binding site" evidence="1">
    <location>
        <position position="469"/>
    </location>
    <ligand>
        <name>Ca(2+)</name>
        <dbReference type="ChEBI" id="CHEBI:29108"/>
        <label>4</label>
    </ligand>
</feature>
<feature type="binding site" evidence="1">
    <location>
        <position position="470"/>
    </location>
    <ligand>
        <name>Ca(2+)</name>
        <dbReference type="ChEBI" id="CHEBI:29108"/>
        <label>4</label>
    </ligand>
</feature>
<feature type="binding site" evidence="1">
    <location>
        <position position="473"/>
    </location>
    <ligand>
        <name>Ca(2+)</name>
        <dbReference type="ChEBI" id="CHEBI:29108"/>
        <label>4</label>
    </ligand>
</feature>
<feature type="binding site" evidence="1">
    <location>
        <position position="476"/>
    </location>
    <ligand>
        <name>Ca(2+)</name>
        <dbReference type="ChEBI" id="CHEBI:29108"/>
        <label>4</label>
    </ligand>
</feature>
<feature type="sequence conflict" description="In Ref. 1; AA sequence." evidence="4" ref="1">
    <original>NEA</original>
    <variation>ATG</variation>
    <location>
        <begin position="287"/>
        <end position="289"/>
    </location>
</feature>
<feature type="strand" evidence="5">
    <location>
        <begin position="289"/>
        <end position="292"/>
    </location>
</feature>
<feature type="strand" evidence="5">
    <location>
        <begin position="298"/>
        <end position="302"/>
    </location>
</feature>
<feature type="strand" evidence="5">
    <location>
        <begin position="304"/>
        <end position="306"/>
    </location>
</feature>
<feature type="strand" evidence="5">
    <location>
        <begin position="309"/>
        <end position="314"/>
    </location>
</feature>
<feature type="strand" evidence="5">
    <location>
        <begin position="321"/>
        <end position="325"/>
    </location>
</feature>
<feature type="strand" evidence="5">
    <location>
        <begin position="338"/>
        <end position="344"/>
    </location>
</feature>
<feature type="helix" evidence="5">
    <location>
        <begin position="347"/>
        <end position="367"/>
    </location>
</feature>
<feature type="turn" evidence="5">
    <location>
        <begin position="371"/>
        <end position="373"/>
    </location>
</feature>
<feature type="strand" evidence="5">
    <location>
        <begin position="379"/>
        <end position="388"/>
    </location>
</feature>
<feature type="strand" evidence="5">
    <location>
        <begin position="392"/>
        <end position="394"/>
    </location>
</feature>
<feature type="strand" evidence="5">
    <location>
        <begin position="399"/>
        <end position="402"/>
    </location>
</feature>
<feature type="strand" evidence="5">
    <location>
        <begin position="408"/>
        <end position="411"/>
    </location>
</feature>
<feature type="helix" evidence="5">
    <location>
        <begin position="414"/>
        <end position="416"/>
    </location>
</feature>
<feature type="helix" evidence="5">
    <location>
        <begin position="418"/>
        <end position="431"/>
    </location>
</feature>
<feature type="turn" evidence="5">
    <location>
        <begin position="432"/>
        <end position="434"/>
    </location>
</feature>
<feature type="helix" evidence="5">
    <location>
        <begin position="440"/>
        <end position="458"/>
    </location>
</feature>
<feature type="strand" evidence="5">
    <location>
        <begin position="460"/>
        <end position="465"/>
    </location>
</feature>
<feature type="helix" evidence="5">
    <location>
        <begin position="466"/>
        <end position="468"/>
    </location>
</feature>
<feature type="strand" evidence="5">
    <location>
        <begin position="478"/>
        <end position="482"/>
    </location>
</feature>
<feature type="helix" evidence="5">
    <location>
        <begin position="484"/>
        <end position="487"/>
    </location>
</feature>
<feature type="helix" evidence="5">
    <location>
        <begin position="493"/>
        <end position="495"/>
    </location>
</feature>
<feature type="helix" evidence="5">
    <location>
        <begin position="501"/>
        <end position="522"/>
    </location>
</feature>
<feature type="strand" evidence="5">
    <location>
        <begin position="524"/>
        <end position="526"/>
    </location>
</feature>
<feature type="strand" evidence="5">
    <location>
        <begin position="529"/>
        <end position="531"/>
    </location>
</feature>
<feature type="helix" evidence="5">
    <location>
        <begin position="536"/>
        <end position="549"/>
    </location>
</feature>
<feature type="helix" evidence="5">
    <location>
        <begin position="557"/>
        <end position="572"/>
    </location>
</feature>
<feature type="helix" evidence="5">
    <location>
        <begin position="577"/>
        <end position="589"/>
    </location>
</feature>